<geneLocation type="chloroplast"/>
<feature type="chain" id="PRO_0000067887" description="DNA-directed RNA polymerase subunit beta'">
    <location>
        <begin position="1"/>
        <end position="682"/>
    </location>
</feature>
<feature type="binding site" evidence="1">
    <location>
        <position position="69"/>
    </location>
    <ligand>
        <name>Zn(2+)</name>
        <dbReference type="ChEBI" id="CHEBI:29105"/>
    </ligand>
</feature>
<feature type="binding site" evidence="1">
    <location>
        <position position="71"/>
    </location>
    <ligand>
        <name>Zn(2+)</name>
        <dbReference type="ChEBI" id="CHEBI:29105"/>
    </ligand>
</feature>
<feature type="binding site" evidence="1">
    <location>
        <position position="87"/>
    </location>
    <ligand>
        <name>Zn(2+)</name>
        <dbReference type="ChEBI" id="CHEBI:29105"/>
    </ligand>
</feature>
<feature type="binding site" evidence="1">
    <location>
        <position position="90"/>
    </location>
    <ligand>
        <name>Zn(2+)</name>
        <dbReference type="ChEBI" id="CHEBI:29105"/>
    </ligand>
</feature>
<feature type="binding site" evidence="1">
    <location>
        <position position="489"/>
    </location>
    <ligand>
        <name>Mg(2+)</name>
        <dbReference type="ChEBI" id="CHEBI:18420"/>
    </ligand>
</feature>
<feature type="binding site" evidence="1">
    <location>
        <position position="491"/>
    </location>
    <ligand>
        <name>Mg(2+)</name>
        <dbReference type="ChEBI" id="CHEBI:18420"/>
    </ligand>
</feature>
<feature type="binding site" evidence="1">
    <location>
        <position position="493"/>
    </location>
    <ligand>
        <name>Mg(2+)</name>
        <dbReference type="ChEBI" id="CHEBI:18420"/>
    </ligand>
</feature>
<sequence length="682" mass="78130">MIDQYKHQQLQIGLVSPQQIKAWANKTLPNGEVVGEVTRPSTFHYKTDKPEKDGLFCERIFGPIKSRICACGNSRASGAENEDERFCQKCGVEFVDSRIRRYQMGYIKLACPVTHVWYLKGLPSYIANLLDKPLKKLEGLVYGDFSFARPSAKKPTFLRLRGLFEDEISSCNHSISPFFSTPGFTTFRNREIATGAGAIREQLADLDLRIILENSSVEWKELEDEGYSGDEWEDRKRRIRKVFLIRRMQLAKHFIQTNVEPEWMVLCLLPVLPPELRPIVYRSGDKVVTSDINELYKRVIRRNNNLAYLLKRSELAPADLVMCQEKLVQEAVDTLLDSGSRGQPTRDGHNKVYKSLSDVIEGKEGRFRETLLGKRVDYSGRSVIVVGPSLSLHQCGLPLEIAIKLFQLFVIRDLITKRATSNVRIAKRKIWEKEPIVWEILQEVMRGHPVLLNRAPTLHRLGIQAFQPTLVEGRTICLHPLVCKGFNADFDGDQMAVHLPLSLEAQAEARLLMFSHMNLLSPAIGDPICVPTQDMLIGLYVLTIGNRRGICANRYNSCGNYPNQKVNYNNNNPKYTKDKESLFSSSYDALGAYRQKQICLDSPLWLRWKLDQRVIGLREVPIEVQYESLGTYREIYAHYLVVGNRKKEIRSIYIRTTLGHISFYREIEEAIQGFSQAYSYTI</sequence>
<evidence type="ECO:0000255" key="1">
    <source>
        <dbReference type="HAMAP-Rule" id="MF_01323"/>
    </source>
</evidence>
<evidence type="ECO:0000305" key="2"/>
<name>RPOC1_ORYSA</name>
<keyword id="KW-0150">Chloroplast</keyword>
<keyword id="KW-0240">DNA-directed RNA polymerase</keyword>
<keyword id="KW-0460">Magnesium</keyword>
<keyword id="KW-0479">Metal-binding</keyword>
<keyword id="KW-0548">Nucleotidyltransferase</keyword>
<keyword id="KW-0934">Plastid</keyword>
<keyword id="KW-0804">Transcription</keyword>
<keyword id="KW-0808">Transferase</keyword>
<keyword id="KW-0862">Zinc</keyword>
<gene>
    <name evidence="1" type="primary">rpoC1</name>
    <name type="ORF">PA037</name>
</gene>
<dbReference type="EC" id="2.7.7.6" evidence="1"/>
<dbReference type="EMBL" id="AY522331">
    <property type="protein sequence ID" value="AAS46175.1"/>
    <property type="status" value="ALT_INIT"/>
    <property type="molecule type" value="Genomic_DNA"/>
</dbReference>
<dbReference type="RefSeq" id="YP_009305295.1">
    <property type="nucleotide sequence ID" value="NC_031333.1"/>
</dbReference>
<dbReference type="SMR" id="P0C504"/>
<dbReference type="GeneID" id="29141352"/>
<dbReference type="ExpressionAtlas" id="P0C504">
    <property type="expression patterns" value="baseline and differential"/>
</dbReference>
<dbReference type="GO" id="GO:0009507">
    <property type="term" value="C:chloroplast"/>
    <property type="evidence" value="ECO:0007669"/>
    <property type="project" value="UniProtKB-SubCell"/>
</dbReference>
<dbReference type="GO" id="GO:0000428">
    <property type="term" value="C:DNA-directed RNA polymerase complex"/>
    <property type="evidence" value="ECO:0007669"/>
    <property type="project" value="UniProtKB-KW"/>
</dbReference>
<dbReference type="GO" id="GO:0005739">
    <property type="term" value="C:mitochondrion"/>
    <property type="evidence" value="ECO:0007669"/>
    <property type="project" value="GOC"/>
</dbReference>
<dbReference type="GO" id="GO:0009536">
    <property type="term" value="C:plastid"/>
    <property type="evidence" value="ECO:0000305"/>
    <property type="project" value="Gramene"/>
</dbReference>
<dbReference type="GO" id="GO:0003677">
    <property type="term" value="F:DNA binding"/>
    <property type="evidence" value="ECO:0007669"/>
    <property type="project" value="UniProtKB-UniRule"/>
</dbReference>
<dbReference type="GO" id="GO:0003899">
    <property type="term" value="F:DNA-directed RNA polymerase activity"/>
    <property type="evidence" value="ECO:0007669"/>
    <property type="project" value="UniProtKB-UniRule"/>
</dbReference>
<dbReference type="GO" id="GO:0000287">
    <property type="term" value="F:magnesium ion binding"/>
    <property type="evidence" value="ECO:0007669"/>
    <property type="project" value="UniProtKB-UniRule"/>
</dbReference>
<dbReference type="GO" id="GO:0008270">
    <property type="term" value="F:zinc ion binding"/>
    <property type="evidence" value="ECO:0007669"/>
    <property type="project" value="UniProtKB-UniRule"/>
</dbReference>
<dbReference type="GO" id="GO:0006351">
    <property type="term" value="P:DNA-templated transcription"/>
    <property type="evidence" value="ECO:0007669"/>
    <property type="project" value="UniProtKB-UniRule"/>
</dbReference>
<dbReference type="Gene3D" id="1.10.40.90">
    <property type="match status" value="1"/>
</dbReference>
<dbReference type="Gene3D" id="2.40.40.20">
    <property type="match status" value="1"/>
</dbReference>
<dbReference type="Gene3D" id="4.10.860.120">
    <property type="entry name" value="RNA polymerase II, clamp domain"/>
    <property type="match status" value="1"/>
</dbReference>
<dbReference type="Gene3D" id="1.10.274.100">
    <property type="entry name" value="RNA polymerase Rpb1, domain 3"/>
    <property type="match status" value="1"/>
</dbReference>
<dbReference type="HAMAP" id="MF_01323">
    <property type="entry name" value="RNApol_bact_RpoC1"/>
    <property type="match status" value="1"/>
</dbReference>
<dbReference type="InterPro" id="IPR045867">
    <property type="entry name" value="DNA-dir_RpoC_beta_prime"/>
</dbReference>
<dbReference type="InterPro" id="IPR000722">
    <property type="entry name" value="RNA_pol_asu"/>
</dbReference>
<dbReference type="InterPro" id="IPR006592">
    <property type="entry name" value="RNA_pol_N"/>
</dbReference>
<dbReference type="InterPro" id="IPR007080">
    <property type="entry name" value="RNA_pol_Rpb1_1"/>
</dbReference>
<dbReference type="InterPro" id="IPR042102">
    <property type="entry name" value="RNA_pol_Rpb1_3_sf"/>
</dbReference>
<dbReference type="InterPro" id="IPR044893">
    <property type="entry name" value="RNA_pol_Rpb1_clamp_domain"/>
</dbReference>
<dbReference type="InterPro" id="IPR034678">
    <property type="entry name" value="RNApol_RpoC1"/>
</dbReference>
<dbReference type="PANTHER" id="PTHR19376">
    <property type="entry name" value="DNA-DIRECTED RNA POLYMERASE"/>
    <property type="match status" value="1"/>
</dbReference>
<dbReference type="PANTHER" id="PTHR19376:SF54">
    <property type="entry name" value="DNA-DIRECTED RNA POLYMERASE SUBUNIT BETA"/>
    <property type="match status" value="1"/>
</dbReference>
<dbReference type="Pfam" id="PF04997">
    <property type="entry name" value="RNA_pol_Rpb1_1"/>
    <property type="match status" value="1"/>
</dbReference>
<dbReference type="Pfam" id="PF00623">
    <property type="entry name" value="RNA_pol_Rpb1_2"/>
    <property type="match status" value="2"/>
</dbReference>
<dbReference type="SMART" id="SM00663">
    <property type="entry name" value="RPOLA_N"/>
    <property type="match status" value="1"/>
</dbReference>
<dbReference type="SUPFAM" id="SSF64484">
    <property type="entry name" value="beta and beta-prime subunits of DNA dependent RNA-polymerase"/>
    <property type="match status" value="1"/>
</dbReference>
<accession>P0C504</accession>
<accession>P12092</accession>
<accession>Q6QY19</accession>
<accession>Q6QY82</accession>
<comment type="function">
    <text evidence="1">DNA-dependent RNA polymerase catalyzes the transcription of DNA into RNA using the four ribonucleoside triphosphates as substrates.</text>
</comment>
<comment type="catalytic activity">
    <reaction evidence="1">
        <text>RNA(n) + a ribonucleoside 5'-triphosphate = RNA(n+1) + diphosphate</text>
        <dbReference type="Rhea" id="RHEA:21248"/>
        <dbReference type="Rhea" id="RHEA-COMP:14527"/>
        <dbReference type="Rhea" id="RHEA-COMP:17342"/>
        <dbReference type="ChEBI" id="CHEBI:33019"/>
        <dbReference type="ChEBI" id="CHEBI:61557"/>
        <dbReference type="ChEBI" id="CHEBI:140395"/>
        <dbReference type="EC" id="2.7.7.6"/>
    </reaction>
</comment>
<comment type="cofactor">
    <cofactor evidence="1">
        <name>Mg(2+)</name>
        <dbReference type="ChEBI" id="CHEBI:18420"/>
    </cofactor>
    <text evidence="1">Binds 1 Mg(2+) ion per subunit.</text>
</comment>
<comment type="cofactor">
    <cofactor evidence="1">
        <name>Zn(2+)</name>
        <dbReference type="ChEBI" id="CHEBI:29105"/>
    </cofactor>
    <text evidence="1">Binds 1 Zn(2+) ion per subunit.</text>
</comment>
<comment type="subunit">
    <text evidence="1">In plastids the minimal PEP RNA polymerase catalytic core is composed of four subunits: alpha, beta, beta', and beta''. When a (nuclear-encoded) sigma factor is associated with the core the holoenzyme is formed, which can initiate transcription.</text>
</comment>
<comment type="subcellular location">
    <subcellularLocation>
        <location evidence="1">Plastid</location>
        <location evidence="1">Chloroplast</location>
    </subcellularLocation>
</comment>
<comment type="similarity">
    <text evidence="1">Belongs to the RNA polymerase beta' chain family. RpoC1 subfamily.</text>
</comment>
<comment type="sequence caution" evidence="2">
    <conflict type="erroneous initiation">
        <sequence resource="EMBL-CDS" id="AAS46175"/>
    </conflict>
    <text>Extended N-terminus.</text>
</comment>
<reference key="1">
    <citation type="journal article" date="2004" name="Plant Physiol.">
        <title>A comparison of rice chloroplast genomes.</title>
        <authorList>
            <person name="Tang J."/>
            <person name="Xia H."/>
            <person name="Cao M."/>
            <person name="Zhang X."/>
            <person name="Zeng W."/>
            <person name="Hu S."/>
            <person name="Tong W."/>
            <person name="Wang J."/>
            <person name="Wang J."/>
            <person name="Yu J."/>
            <person name="Yang H."/>
            <person name="Zhu L."/>
        </authorList>
    </citation>
    <scope>NUCLEOTIDE SEQUENCE [LARGE SCALE GENOMIC DNA]</scope>
    <source>
        <strain>cv. PA64s</strain>
    </source>
</reference>
<organism>
    <name type="scientific">Oryza sativa</name>
    <name type="common">Rice</name>
    <dbReference type="NCBI Taxonomy" id="4530"/>
    <lineage>
        <taxon>Eukaryota</taxon>
        <taxon>Viridiplantae</taxon>
        <taxon>Streptophyta</taxon>
        <taxon>Embryophyta</taxon>
        <taxon>Tracheophyta</taxon>
        <taxon>Spermatophyta</taxon>
        <taxon>Magnoliopsida</taxon>
        <taxon>Liliopsida</taxon>
        <taxon>Poales</taxon>
        <taxon>Poaceae</taxon>
        <taxon>BOP clade</taxon>
        <taxon>Oryzoideae</taxon>
        <taxon>Oryzeae</taxon>
        <taxon>Oryzinae</taxon>
        <taxon>Oryza</taxon>
    </lineage>
</organism>
<protein>
    <recommendedName>
        <fullName evidence="1">DNA-directed RNA polymerase subunit beta'</fullName>
        <ecNumber evidence="1">2.7.7.6</ecNumber>
    </recommendedName>
    <alternativeName>
        <fullName evidence="1">PEP</fullName>
    </alternativeName>
    <alternativeName>
        <fullName evidence="1">Plastid-encoded RNA polymerase subunit beta'</fullName>
        <shortName evidence="1">RNA polymerase subunit beta'</shortName>
    </alternativeName>
</protein>
<proteinExistence type="inferred from homology"/>